<protein>
    <recommendedName>
        <fullName evidence="1">Large ribosomal subunit protein uL13</fullName>
    </recommendedName>
    <alternativeName>
        <fullName evidence="2">50S ribosomal protein L13</fullName>
    </alternativeName>
</protein>
<accession>Q2YND8</accession>
<reference key="1">
    <citation type="journal article" date="2005" name="Infect. Immun.">
        <title>Whole-genome analyses of speciation events in pathogenic Brucellae.</title>
        <authorList>
            <person name="Chain P.S."/>
            <person name="Comerci D.J."/>
            <person name="Tolmasky M.E."/>
            <person name="Larimer F.W."/>
            <person name="Malfatti S.A."/>
            <person name="Vergez L.M."/>
            <person name="Aguero F."/>
            <person name="Land M.L."/>
            <person name="Ugalde R.A."/>
            <person name="Garcia E."/>
        </authorList>
    </citation>
    <scope>NUCLEOTIDE SEQUENCE [LARGE SCALE GENOMIC DNA]</scope>
    <source>
        <strain>2308</strain>
    </source>
</reference>
<feature type="chain" id="PRO_0000261696" description="Large ribosomal subunit protein uL13">
    <location>
        <begin position="1"/>
        <end position="154"/>
    </location>
</feature>
<dbReference type="EMBL" id="AM040264">
    <property type="protein sequence ID" value="CAJ10767.1"/>
    <property type="molecule type" value="Genomic_DNA"/>
</dbReference>
<dbReference type="RefSeq" id="WP_002963926.1">
    <property type="nucleotide sequence ID" value="NZ_KN046823.1"/>
</dbReference>
<dbReference type="SMR" id="Q2YND8"/>
<dbReference type="STRING" id="359391.BAB1_0811"/>
<dbReference type="GeneID" id="93016820"/>
<dbReference type="KEGG" id="bmf:BAB1_0811"/>
<dbReference type="PATRIC" id="fig|359391.11.peg.3123"/>
<dbReference type="HOGENOM" id="CLU_082184_2_0_5"/>
<dbReference type="PhylomeDB" id="Q2YND8"/>
<dbReference type="Proteomes" id="UP000002719">
    <property type="component" value="Chromosome I"/>
</dbReference>
<dbReference type="GO" id="GO:0022625">
    <property type="term" value="C:cytosolic large ribosomal subunit"/>
    <property type="evidence" value="ECO:0007669"/>
    <property type="project" value="TreeGrafter"/>
</dbReference>
<dbReference type="GO" id="GO:0003729">
    <property type="term" value="F:mRNA binding"/>
    <property type="evidence" value="ECO:0007669"/>
    <property type="project" value="TreeGrafter"/>
</dbReference>
<dbReference type="GO" id="GO:0003735">
    <property type="term" value="F:structural constituent of ribosome"/>
    <property type="evidence" value="ECO:0007669"/>
    <property type="project" value="InterPro"/>
</dbReference>
<dbReference type="GO" id="GO:0017148">
    <property type="term" value="P:negative regulation of translation"/>
    <property type="evidence" value="ECO:0007669"/>
    <property type="project" value="TreeGrafter"/>
</dbReference>
<dbReference type="GO" id="GO:0006412">
    <property type="term" value="P:translation"/>
    <property type="evidence" value="ECO:0007669"/>
    <property type="project" value="UniProtKB-UniRule"/>
</dbReference>
<dbReference type="CDD" id="cd00392">
    <property type="entry name" value="Ribosomal_L13"/>
    <property type="match status" value="1"/>
</dbReference>
<dbReference type="FunFam" id="3.90.1180.10:FF:000001">
    <property type="entry name" value="50S ribosomal protein L13"/>
    <property type="match status" value="1"/>
</dbReference>
<dbReference type="Gene3D" id="3.90.1180.10">
    <property type="entry name" value="Ribosomal protein L13"/>
    <property type="match status" value="1"/>
</dbReference>
<dbReference type="HAMAP" id="MF_01366">
    <property type="entry name" value="Ribosomal_uL13"/>
    <property type="match status" value="1"/>
</dbReference>
<dbReference type="InterPro" id="IPR005822">
    <property type="entry name" value="Ribosomal_uL13"/>
</dbReference>
<dbReference type="InterPro" id="IPR005823">
    <property type="entry name" value="Ribosomal_uL13_bac-type"/>
</dbReference>
<dbReference type="InterPro" id="IPR036899">
    <property type="entry name" value="Ribosomal_uL13_sf"/>
</dbReference>
<dbReference type="NCBIfam" id="TIGR01066">
    <property type="entry name" value="rplM_bact"/>
    <property type="match status" value="1"/>
</dbReference>
<dbReference type="PANTHER" id="PTHR11545:SF2">
    <property type="entry name" value="LARGE RIBOSOMAL SUBUNIT PROTEIN UL13M"/>
    <property type="match status" value="1"/>
</dbReference>
<dbReference type="PANTHER" id="PTHR11545">
    <property type="entry name" value="RIBOSOMAL PROTEIN L13"/>
    <property type="match status" value="1"/>
</dbReference>
<dbReference type="Pfam" id="PF00572">
    <property type="entry name" value="Ribosomal_L13"/>
    <property type="match status" value="1"/>
</dbReference>
<dbReference type="PIRSF" id="PIRSF002181">
    <property type="entry name" value="Ribosomal_L13"/>
    <property type="match status" value="1"/>
</dbReference>
<dbReference type="SUPFAM" id="SSF52161">
    <property type="entry name" value="Ribosomal protein L13"/>
    <property type="match status" value="1"/>
</dbReference>
<sequence length="154" mass="17301">MATFSQKPAEVVKKWVLIDAEGLVVGRLASLVANRLRGKHKATFTPHVDDGDNVIIINADKVVLTGKKYTDKKYYWHTGHPGGIKERTARQILEGRFPERVLEKAIERMIPRGPLGRRQMKNLRVNAGPNHQHEAQQPEVLDVAALNRKNKGNA</sequence>
<evidence type="ECO:0000255" key="1">
    <source>
        <dbReference type="HAMAP-Rule" id="MF_01366"/>
    </source>
</evidence>
<evidence type="ECO:0000305" key="2"/>
<gene>
    <name evidence="1" type="primary">rplM</name>
    <name type="ordered locus">BAB1_0811</name>
</gene>
<proteinExistence type="inferred from homology"/>
<name>RL13_BRUA2</name>
<keyword id="KW-1185">Reference proteome</keyword>
<keyword id="KW-0687">Ribonucleoprotein</keyword>
<keyword id="KW-0689">Ribosomal protein</keyword>
<organism>
    <name type="scientific">Brucella abortus (strain 2308)</name>
    <dbReference type="NCBI Taxonomy" id="359391"/>
    <lineage>
        <taxon>Bacteria</taxon>
        <taxon>Pseudomonadati</taxon>
        <taxon>Pseudomonadota</taxon>
        <taxon>Alphaproteobacteria</taxon>
        <taxon>Hyphomicrobiales</taxon>
        <taxon>Brucellaceae</taxon>
        <taxon>Brucella/Ochrobactrum group</taxon>
        <taxon>Brucella</taxon>
    </lineage>
</organism>
<comment type="function">
    <text evidence="1">This protein is one of the early assembly proteins of the 50S ribosomal subunit, although it is not seen to bind rRNA by itself. It is important during the early stages of 50S assembly.</text>
</comment>
<comment type="subunit">
    <text evidence="1">Part of the 50S ribosomal subunit.</text>
</comment>
<comment type="similarity">
    <text evidence="1">Belongs to the universal ribosomal protein uL13 family.</text>
</comment>